<accession>Q89F27</accession>
<reference key="1">
    <citation type="journal article" date="2002" name="DNA Res.">
        <title>Complete genomic sequence of nitrogen-fixing symbiotic bacterium Bradyrhizobium japonicum USDA110.</title>
        <authorList>
            <person name="Kaneko T."/>
            <person name="Nakamura Y."/>
            <person name="Sato S."/>
            <person name="Minamisawa K."/>
            <person name="Uchiumi T."/>
            <person name="Sasamoto S."/>
            <person name="Watanabe A."/>
            <person name="Idesawa K."/>
            <person name="Iriguchi M."/>
            <person name="Kawashima K."/>
            <person name="Kohara M."/>
            <person name="Matsumoto M."/>
            <person name="Shimpo S."/>
            <person name="Tsuruoka H."/>
            <person name="Wada T."/>
            <person name="Yamada M."/>
            <person name="Tabata S."/>
        </authorList>
    </citation>
    <scope>NUCLEOTIDE SEQUENCE [LARGE SCALE GENOMIC DNA]</scope>
    <source>
        <strain>JCM 10833 / BCRC 13528 / IAM 13628 / NBRC 14792 / USDA 110</strain>
    </source>
</reference>
<keyword id="KW-0975">Bacterial flagellum</keyword>
<keyword id="KW-1185">Reference proteome</keyword>
<sequence>MLEAISSTAISAGQAASRATETQAIAPAAPTAIQSGGDVGFDSVMKQVTTDAIGTLKAGEAASISAMQGKESTRRVVEALMSAEQALQTAVAVRDKVVQAYQEVVRMSI</sequence>
<gene>
    <name type="primary">fliE2</name>
    <name type="ordered locus">bll6874</name>
</gene>
<evidence type="ECO:0000250" key="1"/>
<evidence type="ECO:0000305" key="2"/>
<organism>
    <name type="scientific">Bradyrhizobium diazoefficiens (strain JCM 10833 / BCRC 13528 / IAM 13628 / NBRC 14792 / USDA 110)</name>
    <dbReference type="NCBI Taxonomy" id="224911"/>
    <lineage>
        <taxon>Bacteria</taxon>
        <taxon>Pseudomonadati</taxon>
        <taxon>Pseudomonadota</taxon>
        <taxon>Alphaproteobacteria</taxon>
        <taxon>Hyphomicrobiales</taxon>
        <taxon>Nitrobacteraceae</taxon>
        <taxon>Bradyrhizobium</taxon>
    </lineage>
</organism>
<name>FLIE2_BRADU</name>
<proteinExistence type="inferred from homology"/>
<dbReference type="EMBL" id="BA000040">
    <property type="protein sequence ID" value="BAC52139.1"/>
    <property type="molecule type" value="Genomic_DNA"/>
</dbReference>
<dbReference type="RefSeq" id="NP_773514.1">
    <property type="nucleotide sequence ID" value="NC_004463.1"/>
</dbReference>
<dbReference type="RefSeq" id="WP_011089612.1">
    <property type="nucleotide sequence ID" value="NC_004463.1"/>
</dbReference>
<dbReference type="SMR" id="Q89F27"/>
<dbReference type="STRING" id="224911.AAV28_31960"/>
<dbReference type="EnsemblBacteria" id="BAC52139">
    <property type="protein sequence ID" value="BAC52139"/>
    <property type="gene ID" value="BAC52139"/>
</dbReference>
<dbReference type="GeneID" id="46493844"/>
<dbReference type="KEGG" id="bja:bll6874"/>
<dbReference type="PATRIC" id="fig|224911.44.peg.6904"/>
<dbReference type="eggNOG" id="COG1677">
    <property type="taxonomic scope" value="Bacteria"/>
</dbReference>
<dbReference type="HOGENOM" id="CLU_147249_2_0_5"/>
<dbReference type="InParanoid" id="Q89F27"/>
<dbReference type="OrthoDB" id="9812413at2"/>
<dbReference type="PhylomeDB" id="Q89F27"/>
<dbReference type="Proteomes" id="UP000002526">
    <property type="component" value="Chromosome"/>
</dbReference>
<dbReference type="GO" id="GO:0009425">
    <property type="term" value="C:bacterial-type flagellum basal body"/>
    <property type="evidence" value="ECO:0007669"/>
    <property type="project" value="UniProtKB-SubCell"/>
</dbReference>
<dbReference type="GO" id="GO:0003774">
    <property type="term" value="F:cytoskeletal motor activity"/>
    <property type="evidence" value="ECO:0007669"/>
    <property type="project" value="InterPro"/>
</dbReference>
<dbReference type="GO" id="GO:0005198">
    <property type="term" value="F:structural molecule activity"/>
    <property type="evidence" value="ECO:0007669"/>
    <property type="project" value="InterPro"/>
</dbReference>
<dbReference type="GO" id="GO:0044780">
    <property type="term" value="P:bacterial-type flagellum assembly"/>
    <property type="evidence" value="ECO:0000318"/>
    <property type="project" value="GO_Central"/>
</dbReference>
<dbReference type="GO" id="GO:0071973">
    <property type="term" value="P:bacterial-type flagellum-dependent cell motility"/>
    <property type="evidence" value="ECO:0007669"/>
    <property type="project" value="InterPro"/>
</dbReference>
<dbReference type="HAMAP" id="MF_00724">
    <property type="entry name" value="FliE"/>
    <property type="match status" value="1"/>
</dbReference>
<dbReference type="InterPro" id="IPR001624">
    <property type="entry name" value="FliE"/>
</dbReference>
<dbReference type="PANTHER" id="PTHR34653">
    <property type="match status" value="1"/>
</dbReference>
<dbReference type="PANTHER" id="PTHR34653:SF1">
    <property type="entry name" value="FLAGELLAR HOOK-BASAL BODY COMPLEX PROTEIN FLIE"/>
    <property type="match status" value="1"/>
</dbReference>
<dbReference type="Pfam" id="PF02049">
    <property type="entry name" value="FliE"/>
    <property type="match status" value="1"/>
</dbReference>
<feature type="chain" id="PRO_0000105532" description="Flagellar hook-basal body complex protein FliE 2">
    <location>
        <begin position="1"/>
        <end position="109"/>
    </location>
</feature>
<protein>
    <recommendedName>
        <fullName>Flagellar hook-basal body complex protein FliE 2</fullName>
    </recommendedName>
</protein>
<comment type="subcellular location">
    <subcellularLocation>
        <location evidence="1">Bacterial flagellum basal body</location>
    </subcellularLocation>
</comment>
<comment type="similarity">
    <text evidence="2">Belongs to the FliE family.</text>
</comment>